<evidence type="ECO:0000255" key="1">
    <source>
        <dbReference type="HAMAP-Rule" id="MF_01123"/>
    </source>
</evidence>
<keyword id="KW-0007">Acetylation</keyword>
<keyword id="KW-0067">ATP-binding</keyword>
<keyword id="KW-0436">Ligase</keyword>
<keyword id="KW-0460">Magnesium</keyword>
<keyword id="KW-0479">Metal-binding</keyword>
<keyword id="KW-0547">Nucleotide-binding</keyword>
<keyword id="KW-1185">Reference proteome</keyword>
<proteinExistence type="inferred from homology"/>
<dbReference type="EC" id="6.2.1.1" evidence="1"/>
<dbReference type="EMBL" id="AE000516">
    <property type="protein sequence ID" value="AAK48135.1"/>
    <property type="molecule type" value="Genomic_DNA"/>
</dbReference>
<dbReference type="PIR" id="D70789">
    <property type="entry name" value="D70789"/>
</dbReference>
<dbReference type="RefSeq" id="WP_003899631.1">
    <property type="nucleotide sequence ID" value="NZ_KK341227.1"/>
</dbReference>
<dbReference type="SMR" id="P9WQD0"/>
<dbReference type="KEGG" id="mtc:MT3768"/>
<dbReference type="PATRIC" id="fig|83331.31.peg.4058"/>
<dbReference type="HOGENOM" id="CLU_000022_3_6_11"/>
<dbReference type="Proteomes" id="UP000001020">
    <property type="component" value="Chromosome"/>
</dbReference>
<dbReference type="GO" id="GO:0005829">
    <property type="term" value="C:cytosol"/>
    <property type="evidence" value="ECO:0007669"/>
    <property type="project" value="TreeGrafter"/>
</dbReference>
<dbReference type="GO" id="GO:0003987">
    <property type="term" value="F:acetate-CoA ligase activity"/>
    <property type="evidence" value="ECO:0007669"/>
    <property type="project" value="UniProtKB-UniRule"/>
</dbReference>
<dbReference type="GO" id="GO:0016208">
    <property type="term" value="F:AMP binding"/>
    <property type="evidence" value="ECO:0007669"/>
    <property type="project" value="InterPro"/>
</dbReference>
<dbReference type="GO" id="GO:0005524">
    <property type="term" value="F:ATP binding"/>
    <property type="evidence" value="ECO:0007669"/>
    <property type="project" value="UniProtKB-KW"/>
</dbReference>
<dbReference type="GO" id="GO:0046872">
    <property type="term" value="F:metal ion binding"/>
    <property type="evidence" value="ECO:0007669"/>
    <property type="project" value="UniProtKB-KW"/>
</dbReference>
<dbReference type="GO" id="GO:0019427">
    <property type="term" value="P:acetyl-CoA biosynthetic process from acetate"/>
    <property type="evidence" value="ECO:0007669"/>
    <property type="project" value="InterPro"/>
</dbReference>
<dbReference type="CDD" id="cd05966">
    <property type="entry name" value="ACS"/>
    <property type="match status" value="1"/>
</dbReference>
<dbReference type="FunFam" id="3.30.300.30:FF:000047">
    <property type="entry name" value="Acetyl-coenzyme A synthetase"/>
    <property type="match status" value="1"/>
</dbReference>
<dbReference type="FunFam" id="3.40.50.12780:FF:000001">
    <property type="entry name" value="Acetyl-coenzyme A synthetase"/>
    <property type="match status" value="1"/>
</dbReference>
<dbReference type="Gene3D" id="3.30.300.30">
    <property type="match status" value="1"/>
</dbReference>
<dbReference type="Gene3D" id="3.40.50.12780">
    <property type="entry name" value="N-terminal domain of ligase-like"/>
    <property type="match status" value="1"/>
</dbReference>
<dbReference type="HAMAP" id="MF_01123">
    <property type="entry name" value="Ac_CoA_synth"/>
    <property type="match status" value="1"/>
</dbReference>
<dbReference type="InterPro" id="IPR011904">
    <property type="entry name" value="Ac_CoA_lig"/>
</dbReference>
<dbReference type="InterPro" id="IPR032387">
    <property type="entry name" value="ACAS_N"/>
</dbReference>
<dbReference type="InterPro" id="IPR025110">
    <property type="entry name" value="AMP-bd_C"/>
</dbReference>
<dbReference type="InterPro" id="IPR045851">
    <property type="entry name" value="AMP-bd_C_sf"/>
</dbReference>
<dbReference type="InterPro" id="IPR020845">
    <property type="entry name" value="AMP-binding_CS"/>
</dbReference>
<dbReference type="InterPro" id="IPR000873">
    <property type="entry name" value="AMP-dep_synth/lig_dom"/>
</dbReference>
<dbReference type="InterPro" id="IPR042099">
    <property type="entry name" value="ANL_N_sf"/>
</dbReference>
<dbReference type="NCBIfam" id="TIGR02188">
    <property type="entry name" value="Ac_CoA_lig_AcsA"/>
    <property type="match status" value="1"/>
</dbReference>
<dbReference type="NCBIfam" id="NF001208">
    <property type="entry name" value="PRK00174.1"/>
    <property type="match status" value="1"/>
</dbReference>
<dbReference type="PANTHER" id="PTHR24095">
    <property type="entry name" value="ACETYL-COENZYME A SYNTHETASE"/>
    <property type="match status" value="1"/>
</dbReference>
<dbReference type="PANTHER" id="PTHR24095:SF14">
    <property type="entry name" value="ACETYL-COENZYME A SYNTHETASE 1"/>
    <property type="match status" value="1"/>
</dbReference>
<dbReference type="Pfam" id="PF16177">
    <property type="entry name" value="ACAS_N"/>
    <property type="match status" value="1"/>
</dbReference>
<dbReference type="Pfam" id="PF00501">
    <property type="entry name" value="AMP-binding"/>
    <property type="match status" value="1"/>
</dbReference>
<dbReference type="Pfam" id="PF13193">
    <property type="entry name" value="AMP-binding_C"/>
    <property type="match status" value="1"/>
</dbReference>
<dbReference type="SUPFAM" id="SSF56801">
    <property type="entry name" value="Acetyl-CoA synthetase-like"/>
    <property type="match status" value="1"/>
</dbReference>
<dbReference type="PROSITE" id="PS00455">
    <property type="entry name" value="AMP_BINDING"/>
    <property type="match status" value="1"/>
</dbReference>
<protein>
    <recommendedName>
        <fullName evidence="1">Acetyl-coenzyme A synthetase</fullName>
        <shortName evidence="1">AcCoA synthetase</shortName>
        <shortName evidence="1">Acs</shortName>
        <ecNumber evidence="1">6.2.1.1</ecNumber>
    </recommendedName>
    <alternativeName>
        <fullName evidence="1">Acetate--CoA ligase</fullName>
    </alternativeName>
    <alternativeName>
        <fullName evidence="1">Acyl-activating enzyme</fullName>
    </alternativeName>
</protein>
<accession>P9WQD0</accession>
<accession>L0TGD8</accession>
<accession>O69635</accession>
<comment type="function">
    <text evidence="1">Catalyzes the conversion of acetate into acetyl-CoA (AcCoA), an essential intermediate at the junction of anabolic and catabolic pathways. AcsA undergoes a two-step reaction. In the first half reaction, AcsA combines acetate with ATP to form acetyl-adenylate (AcAMP) intermediate. In the second half reaction, it can then transfer the acetyl group from AcAMP to the sulfhydryl group of CoA, forming the product AcCoA. M.tuberculosis may use AcsA for both acetate and propionate assimilation (By similarity).</text>
</comment>
<comment type="catalytic activity">
    <reaction evidence="1">
        <text>acetate + ATP + CoA = acetyl-CoA + AMP + diphosphate</text>
        <dbReference type="Rhea" id="RHEA:23176"/>
        <dbReference type="ChEBI" id="CHEBI:30089"/>
        <dbReference type="ChEBI" id="CHEBI:30616"/>
        <dbReference type="ChEBI" id="CHEBI:33019"/>
        <dbReference type="ChEBI" id="CHEBI:57287"/>
        <dbReference type="ChEBI" id="CHEBI:57288"/>
        <dbReference type="ChEBI" id="CHEBI:456215"/>
        <dbReference type="EC" id="6.2.1.1"/>
    </reaction>
</comment>
<comment type="cofactor">
    <cofactor evidence="1">
        <name>Mg(2+)</name>
        <dbReference type="ChEBI" id="CHEBI:18420"/>
    </cofactor>
</comment>
<comment type="PTM">
    <text evidence="1">Acetylated. Deacetylation by the SIR2-homolog deacetylase activates the enzyme.</text>
</comment>
<comment type="similarity">
    <text evidence="1">Belongs to the ATP-dependent AMP-binding enzyme family.</text>
</comment>
<feature type="chain" id="PRO_0000426797" description="Acetyl-coenzyme A synthetase">
    <location>
        <begin position="1"/>
        <end position="651"/>
    </location>
</feature>
<feature type="binding site" evidence="1">
    <location>
        <begin position="190"/>
        <end position="193"/>
    </location>
    <ligand>
        <name>CoA</name>
        <dbReference type="ChEBI" id="CHEBI:57287"/>
    </ligand>
</feature>
<feature type="binding site" evidence="1">
    <location>
        <position position="311"/>
    </location>
    <ligand>
        <name>CoA</name>
        <dbReference type="ChEBI" id="CHEBI:57287"/>
    </ligand>
</feature>
<feature type="binding site" evidence="1">
    <location>
        <begin position="387"/>
        <end position="389"/>
    </location>
    <ligand>
        <name>ATP</name>
        <dbReference type="ChEBI" id="CHEBI:30616"/>
    </ligand>
</feature>
<feature type="binding site" evidence="1">
    <location>
        <begin position="411"/>
        <end position="416"/>
    </location>
    <ligand>
        <name>ATP</name>
        <dbReference type="ChEBI" id="CHEBI:30616"/>
    </ligand>
</feature>
<feature type="binding site" evidence="1">
    <location>
        <position position="508"/>
    </location>
    <ligand>
        <name>ATP</name>
        <dbReference type="ChEBI" id="CHEBI:30616"/>
    </ligand>
</feature>
<feature type="binding site" evidence="1">
    <location>
        <position position="523"/>
    </location>
    <ligand>
        <name>ATP</name>
        <dbReference type="ChEBI" id="CHEBI:30616"/>
    </ligand>
</feature>
<feature type="binding site" evidence="1">
    <location>
        <position position="531"/>
    </location>
    <ligand>
        <name>CoA</name>
        <dbReference type="ChEBI" id="CHEBI:57287"/>
    </ligand>
</feature>
<feature type="binding site" evidence="1">
    <location>
        <position position="534"/>
    </location>
    <ligand>
        <name>ATP</name>
        <dbReference type="ChEBI" id="CHEBI:30616"/>
    </ligand>
</feature>
<feature type="binding site" evidence="1">
    <location>
        <position position="545"/>
    </location>
    <ligand>
        <name>Mg(2+)</name>
        <dbReference type="ChEBI" id="CHEBI:18420"/>
    </ligand>
</feature>
<feature type="binding site" evidence="1">
    <location>
        <position position="547"/>
    </location>
    <ligand>
        <name>Mg(2+)</name>
        <dbReference type="ChEBI" id="CHEBI:18420"/>
    </ligand>
</feature>
<feature type="binding site" evidence="1">
    <location>
        <position position="550"/>
    </location>
    <ligand>
        <name>Mg(2+)</name>
        <dbReference type="ChEBI" id="CHEBI:18420"/>
    </ligand>
</feature>
<feature type="modified residue" description="N6-acetyllysine" evidence="1">
    <location>
        <position position="617"/>
    </location>
</feature>
<gene>
    <name evidence="1" type="primary">acsA</name>
    <name type="synonym">acs</name>
    <name type="ordered locus">MT3768</name>
</gene>
<reference key="1">
    <citation type="journal article" date="2002" name="J. Bacteriol.">
        <title>Whole-genome comparison of Mycobacterium tuberculosis clinical and laboratory strains.</title>
        <authorList>
            <person name="Fleischmann R.D."/>
            <person name="Alland D."/>
            <person name="Eisen J.A."/>
            <person name="Carpenter L."/>
            <person name="White O."/>
            <person name="Peterson J.D."/>
            <person name="DeBoy R.T."/>
            <person name="Dodson R.J."/>
            <person name="Gwinn M.L."/>
            <person name="Haft D.H."/>
            <person name="Hickey E.K."/>
            <person name="Kolonay J.F."/>
            <person name="Nelson W.C."/>
            <person name="Umayam L.A."/>
            <person name="Ermolaeva M.D."/>
            <person name="Salzberg S.L."/>
            <person name="Delcher A."/>
            <person name="Utterback T.R."/>
            <person name="Weidman J.F."/>
            <person name="Khouri H.M."/>
            <person name="Gill J."/>
            <person name="Mikula A."/>
            <person name="Bishai W."/>
            <person name="Jacobs W.R. Jr."/>
            <person name="Venter J.C."/>
            <person name="Fraser C.M."/>
        </authorList>
    </citation>
    <scope>NUCLEOTIDE SEQUENCE [LARGE SCALE GENOMIC DNA]</scope>
    <source>
        <strain>CDC 1551 / Oshkosh</strain>
    </source>
</reference>
<name>ACSA_MYCTO</name>
<organism>
    <name type="scientific">Mycobacterium tuberculosis (strain CDC 1551 / Oshkosh)</name>
    <dbReference type="NCBI Taxonomy" id="83331"/>
    <lineage>
        <taxon>Bacteria</taxon>
        <taxon>Bacillati</taxon>
        <taxon>Actinomycetota</taxon>
        <taxon>Actinomycetes</taxon>
        <taxon>Mycobacteriales</taxon>
        <taxon>Mycobacteriaceae</taxon>
        <taxon>Mycobacterium</taxon>
        <taxon>Mycobacterium tuberculosis complex</taxon>
    </lineage>
</organism>
<sequence length="651" mass="71476">MSESTPEVSSSYPPPAHFAEHANARAELYREAEEDRLAFWAKQANRLSWTTPFTEVLDWSGAPFAKWFVGGELNVAYNCVDRHVEAGHGDRVAIHWEGEPVGDRRTLTYSDLLAEVSKAANALTDLGLVAGDRVAIYLPLIPEAVIAMLACARLGIMHSVVFGGFTAAALQARIVDAQAKLLITADGQFRRGKPSPLKAAADEALAAIPDCSVEHVLVVRRTGIEMAWSEGRDLWWHHVVGSASPAHTPEPFDSEHPLFLLYTSGTTGKPKGIMHTSGGYLTQCCYTMRTIFDVKPDSDVFWCTADIGWVTGHTYGVYGPLCNGVTEVLYEGTPDTPDRHRHFQIIEKYGVTIYYTAPTLIRMFMKWGREIPDSHDLSSLRLLGSVGEPINPEAWRWYRDVIGGGRTPLVDTWWQTETGSAMISPLPGIAAAKPGSAMTPLPGISAKIVDDHGDPLPPHTEGAQHVTGYLVLDQPWPSMLRGIWGDPARYWHSYWSKFSDKGYYFAGDGARIDPDGAIWVLGRIDDVMNVSGHRISTAEVESALVAHSGVAEAAVVGVTDETTTQAICAFVVLRANYAPHDRTAEELRTEVARVISPIARPRDVHVVPELPKTRSGKIMRRLLRDVAENRELGDTSTLLDPTVFDAIRAAK</sequence>